<reference key="1">
    <citation type="journal article" date="2009" name="J. Bacteriol.">
        <title>Complete genome sequence of Haemophilus parasuis SH0165.</title>
        <authorList>
            <person name="Yue M."/>
            <person name="Yang F."/>
            <person name="Yang J."/>
            <person name="Bei W."/>
            <person name="Cai X."/>
            <person name="Chen L."/>
            <person name="Dong J."/>
            <person name="Zhou R."/>
            <person name="Jin M."/>
            <person name="Jin Q."/>
            <person name="Chen H."/>
        </authorList>
    </citation>
    <scope>NUCLEOTIDE SEQUENCE [LARGE SCALE GENOMIC DNA]</scope>
    <source>
        <strain>SH0165</strain>
    </source>
</reference>
<dbReference type="EMBL" id="CP001321">
    <property type="protein sequence ID" value="ACL32876.1"/>
    <property type="molecule type" value="Genomic_DNA"/>
</dbReference>
<dbReference type="RefSeq" id="WP_015939701.1">
    <property type="nucleotide sequence ID" value="NC_011852.1"/>
</dbReference>
<dbReference type="SMR" id="B8F6C4"/>
<dbReference type="STRING" id="557723.HAPS_1284"/>
<dbReference type="KEGG" id="hap:HAPS_1284"/>
<dbReference type="HOGENOM" id="CLU_133780_0_0_6"/>
<dbReference type="Proteomes" id="UP000006743">
    <property type="component" value="Chromosome"/>
</dbReference>
<dbReference type="GO" id="GO:0005829">
    <property type="term" value="C:cytosol"/>
    <property type="evidence" value="ECO:0007669"/>
    <property type="project" value="TreeGrafter"/>
</dbReference>
<dbReference type="GO" id="GO:0008861">
    <property type="term" value="F:formate C-acetyltransferase activity"/>
    <property type="evidence" value="ECO:0007669"/>
    <property type="project" value="TreeGrafter"/>
</dbReference>
<dbReference type="FunFam" id="3.20.70.20:FF:000002">
    <property type="entry name" value="Autonomous glycyl radical cofactor"/>
    <property type="match status" value="1"/>
</dbReference>
<dbReference type="Gene3D" id="3.20.70.20">
    <property type="match status" value="1"/>
</dbReference>
<dbReference type="HAMAP" id="MF_00806">
    <property type="entry name" value="GrcA"/>
    <property type="match status" value="1"/>
</dbReference>
<dbReference type="InterPro" id="IPR050244">
    <property type="entry name" value="Auton_GlycylRad_Cofactor"/>
</dbReference>
<dbReference type="InterPro" id="IPR019777">
    <property type="entry name" value="Form_AcTrfase_GR_CS"/>
</dbReference>
<dbReference type="InterPro" id="IPR001150">
    <property type="entry name" value="Gly_radical"/>
</dbReference>
<dbReference type="InterPro" id="IPR011140">
    <property type="entry name" value="Glycyl_radical_cofactor_GrcA"/>
</dbReference>
<dbReference type="NCBIfam" id="TIGR04365">
    <property type="entry name" value="spare_glycyl"/>
    <property type="match status" value="1"/>
</dbReference>
<dbReference type="PANTHER" id="PTHR30191">
    <property type="entry name" value="FORMATE ACETYLTRANSFERASE"/>
    <property type="match status" value="1"/>
</dbReference>
<dbReference type="PANTHER" id="PTHR30191:SF0">
    <property type="entry name" value="FORMATE ACETYLTRANSFERASE 1"/>
    <property type="match status" value="1"/>
</dbReference>
<dbReference type="Pfam" id="PF01228">
    <property type="entry name" value="Gly_radical"/>
    <property type="match status" value="1"/>
</dbReference>
<dbReference type="PIRSF" id="PIRSF000378">
    <property type="entry name" value="Gly_radicl_yfiD"/>
    <property type="match status" value="1"/>
</dbReference>
<dbReference type="SUPFAM" id="SSF51998">
    <property type="entry name" value="PFL-like glycyl radical enzymes"/>
    <property type="match status" value="1"/>
</dbReference>
<dbReference type="PROSITE" id="PS00850">
    <property type="entry name" value="GLY_RADICAL_1"/>
    <property type="match status" value="1"/>
</dbReference>
<dbReference type="PROSITE" id="PS51149">
    <property type="entry name" value="GLY_RADICAL_2"/>
    <property type="match status" value="1"/>
</dbReference>
<gene>
    <name evidence="1" type="primary">grcA</name>
    <name type="ordered locus">HAPS_1284</name>
</gene>
<proteinExistence type="inferred from homology"/>
<organism>
    <name type="scientific">Glaesserella parasuis serovar 5 (strain SH0165)</name>
    <name type="common">Haemophilus parasuis</name>
    <dbReference type="NCBI Taxonomy" id="557723"/>
    <lineage>
        <taxon>Bacteria</taxon>
        <taxon>Pseudomonadati</taxon>
        <taxon>Pseudomonadota</taxon>
        <taxon>Gammaproteobacteria</taxon>
        <taxon>Pasteurellales</taxon>
        <taxon>Pasteurellaceae</taxon>
        <taxon>Glaesserella</taxon>
    </lineage>
</organism>
<protein>
    <recommendedName>
        <fullName evidence="1">Autonomous glycyl radical cofactor</fullName>
    </recommendedName>
</protein>
<comment type="function">
    <text evidence="1">Acts as a radical domain for damaged PFL and possibly other radical proteins.</text>
</comment>
<sequence length="127" mass="14418">MIKGVQITESTNKNLLNSFWLLDEEKNEARCLVAKGDFQEDQIVAISELGQVSYREVPVNVAPTIKVEGGQHLNVNVLRRETLEDAVKNPEKYPQLTIRVSGYAVRFNSLTPEQQRDVITRTFTESL</sequence>
<accession>B8F6C4</accession>
<evidence type="ECO:0000255" key="1">
    <source>
        <dbReference type="HAMAP-Rule" id="MF_00806"/>
    </source>
</evidence>
<name>GRCA_GLAP5</name>
<keyword id="KW-0556">Organic radical</keyword>
<keyword id="KW-1185">Reference proteome</keyword>
<feature type="chain" id="PRO_1000148570" description="Autonomous glycyl radical cofactor">
    <location>
        <begin position="1"/>
        <end position="127"/>
    </location>
</feature>
<feature type="domain" description="Glycine radical" evidence="1">
    <location>
        <begin position="5"/>
        <end position="127"/>
    </location>
</feature>
<feature type="modified residue" description="Glycine radical" evidence="1">
    <location>
        <position position="102"/>
    </location>
</feature>